<feature type="chain" id="PRO_0000058764" description="Cardiotrophin-1">
    <location>
        <begin position="1"/>
        <end position="203"/>
    </location>
</feature>
<protein>
    <recommendedName>
        <fullName>Cardiotrophin-1</fullName>
        <shortName>CT-1</shortName>
    </recommendedName>
</protein>
<accession>Q63086</accession>
<gene>
    <name type="primary">Ctf1</name>
</gene>
<evidence type="ECO:0000250" key="1"/>
<evidence type="ECO:0000305" key="2"/>
<comment type="function">
    <text>Induces cardiac myocyte hypertrophy in vitro. Binds to and activates the ILST/gp130 receptor.</text>
</comment>
<comment type="subcellular location">
    <subcellularLocation>
        <location evidence="1">Secreted</location>
    </subcellularLocation>
</comment>
<comment type="tissue specificity">
    <text>Expressed in the ventricle and atrium of adult rats. Also detected in the lung, kidney, liver, skeletal muscle, stomach and urinary bladder. Not detected in brain, colon, testis, spleen or thymus. Overexpressed in the ventricles in the case of hypertension and hypertrophy.</text>
</comment>
<comment type="similarity">
    <text evidence="2">Belongs to the IL-6 superfamily.</text>
</comment>
<dbReference type="EMBL" id="D78591">
    <property type="protein sequence ID" value="BAA11427.1"/>
    <property type="molecule type" value="mRNA"/>
</dbReference>
<dbReference type="EMBL" id="BC072690">
    <property type="protein sequence ID" value="AAH72690.1"/>
    <property type="molecule type" value="mRNA"/>
</dbReference>
<dbReference type="PIR" id="JC4645">
    <property type="entry name" value="JC4645"/>
</dbReference>
<dbReference type="RefSeq" id="NP_058825.1">
    <property type="nucleotide sequence ID" value="NM_017129.1"/>
</dbReference>
<dbReference type="SMR" id="Q63086"/>
<dbReference type="FunCoup" id="Q63086">
    <property type="interactions" value="140"/>
</dbReference>
<dbReference type="STRING" id="10116.ENSRNOP00000025646"/>
<dbReference type="PhosphoSitePlus" id="Q63086"/>
<dbReference type="jPOST" id="Q63086"/>
<dbReference type="PaxDb" id="10116-ENSRNOP00000025646"/>
<dbReference type="GeneID" id="29201"/>
<dbReference type="KEGG" id="rno:29201"/>
<dbReference type="UCSC" id="RGD:2442">
    <property type="organism name" value="rat"/>
</dbReference>
<dbReference type="AGR" id="RGD:2442"/>
<dbReference type="CTD" id="1489"/>
<dbReference type="RGD" id="2442">
    <property type="gene designation" value="Ctf1"/>
</dbReference>
<dbReference type="VEuPathDB" id="HostDB:ENSRNOG00000018962"/>
<dbReference type="eggNOG" id="ENOG502S5Z6">
    <property type="taxonomic scope" value="Eukaryota"/>
</dbReference>
<dbReference type="HOGENOM" id="CLU_117233_0_0_1"/>
<dbReference type="InParanoid" id="Q63086"/>
<dbReference type="PhylomeDB" id="Q63086"/>
<dbReference type="TreeFam" id="TF333266"/>
<dbReference type="Reactome" id="R-RNO-6788467">
    <property type="pathway name" value="IL-6-type cytokine receptor ligand interactions"/>
</dbReference>
<dbReference type="PRO" id="PR:Q63086"/>
<dbReference type="Proteomes" id="UP000002494">
    <property type="component" value="Chromosome 1"/>
</dbReference>
<dbReference type="Bgee" id="ENSRNOG00000018962">
    <property type="expression patterns" value="Expressed in kidney and 19 other cell types or tissues"/>
</dbReference>
<dbReference type="GO" id="GO:0005576">
    <property type="term" value="C:extracellular region"/>
    <property type="evidence" value="ECO:0000318"/>
    <property type="project" value="GO_Central"/>
</dbReference>
<dbReference type="GO" id="GO:0005615">
    <property type="term" value="C:extracellular space"/>
    <property type="evidence" value="ECO:0007669"/>
    <property type="project" value="UniProtKB-KW"/>
</dbReference>
<dbReference type="GO" id="GO:0005125">
    <property type="term" value="F:cytokine activity"/>
    <property type="evidence" value="ECO:0000315"/>
    <property type="project" value="RGD"/>
</dbReference>
<dbReference type="GO" id="GO:0005146">
    <property type="term" value="F:leukemia inhibitory factor receptor binding"/>
    <property type="evidence" value="ECO:0000315"/>
    <property type="project" value="RGD"/>
</dbReference>
<dbReference type="GO" id="GO:0007259">
    <property type="term" value="P:cell surface receptor signaling pathway via JAK-STAT"/>
    <property type="evidence" value="ECO:0000318"/>
    <property type="project" value="GO_Central"/>
</dbReference>
<dbReference type="GO" id="GO:0006955">
    <property type="term" value="P:immune response"/>
    <property type="evidence" value="ECO:0007669"/>
    <property type="project" value="InterPro"/>
</dbReference>
<dbReference type="GO" id="GO:0048861">
    <property type="term" value="P:leukemia inhibitory factor signaling pathway"/>
    <property type="evidence" value="ECO:0000315"/>
    <property type="project" value="RGD"/>
</dbReference>
<dbReference type="GO" id="GO:0007399">
    <property type="term" value="P:nervous system development"/>
    <property type="evidence" value="ECO:0000314"/>
    <property type="project" value="RGD"/>
</dbReference>
<dbReference type="GO" id="GO:0048666">
    <property type="term" value="P:neuron development"/>
    <property type="evidence" value="ECO:0000266"/>
    <property type="project" value="RGD"/>
</dbReference>
<dbReference type="FunFam" id="1.20.1250.10:FF:000027">
    <property type="entry name" value="Cardiotrophin 1"/>
    <property type="match status" value="1"/>
</dbReference>
<dbReference type="Gene3D" id="1.20.1250.10">
    <property type="match status" value="1"/>
</dbReference>
<dbReference type="InterPro" id="IPR009079">
    <property type="entry name" value="4_helix_cytokine-like_core"/>
</dbReference>
<dbReference type="InterPro" id="IPR001581">
    <property type="entry name" value="Leukemia_IF/oncostatin"/>
</dbReference>
<dbReference type="InterPro" id="IPR010681">
    <property type="entry name" value="PRF/CT"/>
</dbReference>
<dbReference type="PANTHER" id="PTHR21353">
    <property type="match status" value="1"/>
</dbReference>
<dbReference type="PANTHER" id="PTHR21353:SF2">
    <property type="entry name" value="CARDIOTROPHIN-1"/>
    <property type="match status" value="1"/>
</dbReference>
<dbReference type="Pfam" id="PF01291">
    <property type="entry name" value="LIF_OSM"/>
    <property type="match status" value="1"/>
</dbReference>
<dbReference type="SUPFAM" id="SSF47266">
    <property type="entry name" value="4-helical cytokines"/>
    <property type="match status" value="1"/>
</dbReference>
<organism>
    <name type="scientific">Rattus norvegicus</name>
    <name type="common">Rat</name>
    <dbReference type="NCBI Taxonomy" id="10116"/>
    <lineage>
        <taxon>Eukaryota</taxon>
        <taxon>Metazoa</taxon>
        <taxon>Chordata</taxon>
        <taxon>Craniata</taxon>
        <taxon>Vertebrata</taxon>
        <taxon>Euteleostomi</taxon>
        <taxon>Mammalia</taxon>
        <taxon>Eutheria</taxon>
        <taxon>Euarchontoglires</taxon>
        <taxon>Glires</taxon>
        <taxon>Rodentia</taxon>
        <taxon>Myomorpha</taxon>
        <taxon>Muroidea</taxon>
        <taxon>Muridae</taxon>
        <taxon>Murinae</taxon>
        <taxon>Rattus</taxon>
    </lineage>
</organism>
<keyword id="KW-0202">Cytokine</keyword>
<keyword id="KW-1185">Reference proteome</keyword>
<keyword id="KW-0964">Secreted</keyword>
<reference key="1">
    <citation type="journal article" date="1996" name="Biochem. Biophys. Res. Commun.">
        <title>cDNA cloning of rat cardiotrophin-1 (CT-1): augmented expression of CT-1 gene in ventricle of genetically hypertensive rats.</title>
        <authorList>
            <person name="Ishikawa M."/>
            <person name="Saito Y."/>
            <person name="Miyamoto Y."/>
            <person name="Kuwahara K."/>
            <person name="Ogawa E."/>
            <person name="Nakagawa O."/>
            <person name="Harada M."/>
            <person name="Masuda I."/>
            <person name="Nakao K."/>
        </authorList>
    </citation>
    <scope>NUCLEOTIDE SEQUENCE [MRNA]</scope>
    <source>
        <strain>Wistar</strain>
        <tissue>Heart</tissue>
    </source>
</reference>
<reference key="2">
    <citation type="journal article" date="2004" name="Genome Res.">
        <title>The status, quality, and expansion of the NIH full-length cDNA project: the Mammalian Gene Collection (MGC).</title>
        <authorList>
            <consortium name="The MGC Project Team"/>
        </authorList>
    </citation>
    <scope>NUCLEOTIDE SEQUENCE [LARGE SCALE MRNA]</scope>
    <source>
        <tissue>Lung</tissue>
    </source>
</reference>
<name>CTF1_RAT</name>
<proteinExistence type="evidence at transcript level"/>
<sequence>MSQREGSLEDHQTDSSFSFLPHLEAKIRQTHNLARLLTKYADQLLEEYVQQQGEPFGLPGFSPPRLPLAGLSGPAPSHAGLPVSERLRQDAAALSALPALLDAVRRRQAELNPRAPRLLRSLEDAARQVRALGAAVETVLAALGAAARGPVPEPVATSALFTSNSAAGVFSAKVLGLHVCGLYGEWVSRTEGDLGQLVPGGVA</sequence>